<evidence type="ECO:0000255" key="1">
    <source>
        <dbReference type="HAMAP-Rule" id="MF_04088"/>
    </source>
</evidence>
<evidence type="ECO:0000269" key="2">
    <source>
    </source>
</evidence>
<evidence type="ECO:0000269" key="3">
    <source>
    </source>
</evidence>
<evidence type="ECO:0000269" key="4">
    <source>
    </source>
</evidence>
<evidence type="ECO:0000269" key="5">
    <source>
    </source>
</evidence>
<evidence type="ECO:0000269" key="6">
    <source>
    </source>
</evidence>
<evidence type="ECO:0000269" key="7">
    <source>
    </source>
</evidence>
<evidence type="ECO:0007744" key="8">
    <source>
        <dbReference type="PDB" id="5JEO"/>
    </source>
</evidence>
<evidence type="ECO:0007744" key="9">
    <source>
        <dbReference type="PDB" id="5JER"/>
    </source>
</evidence>
<organism>
    <name type="scientific">Rotavirus A (strain RVA/SA11-4F/G3P6[1])</name>
    <name type="common">RV-A</name>
    <name type="synonym">Simian Agent 11 (strain 4F)</name>
    <dbReference type="NCBI Taxonomy" id="36436"/>
    <lineage>
        <taxon>Viruses</taxon>
        <taxon>Riboviria</taxon>
        <taxon>Orthornavirae</taxon>
        <taxon>Duplornaviricota</taxon>
        <taxon>Resentoviricetes</taxon>
        <taxon>Reovirales</taxon>
        <taxon>Sedoreoviridae</taxon>
        <taxon>Rotavirus</taxon>
        <taxon>Rotavirus A</taxon>
    </lineage>
</organism>
<organismHost>
    <name type="scientific">Macaca mulatta</name>
    <name type="common">Rhesus macaque</name>
    <dbReference type="NCBI Taxonomy" id="9544"/>
</organismHost>
<dbReference type="EMBL" id="AF290883">
    <property type="protein sequence ID" value="AAK14071.1"/>
    <property type="molecule type" value="Genomic_RNA"/>
</dbReference>
<dbReference type="EMBL" id="AF290884">
    <property type="protein sequence ID" value="AAK14072.1"/>
    <property type="molecule type" value="Genomic_RNA"/>
</dbReference>
<dbReference type="PDB" id="5JEO">
    <property type="method" value="X-ray"/>
    <property type="resolution" value="1.72 A"/>
    <property type="chains" value="B=479-494"/>
</dbReference>
<dbReference type="PDB" id="5JER">
    <property type="method" value="X-ray"/>
    <property type="resolution" value="2.91 A"/>
    <property type="chains" value="B/D/F/H=479-494"/>
</dbReference>
<dbReference type="PDBsum" id="5JEO"/>
<dbReference type="PDBsum" id="5JER"/>
<dbReference type="SMR" id="Q99FX5"/>
<dbReference type="GO" id="GO:0030430">
    <property type="term" value="C:host cell cytoplasm"/>
    <property type="evidence" value="ECO:0007669"/>
    <property type="project" value="UniProtKB-UniRule"/>
</dbReference>
<dbReference type="GO" id="GO:0044163">
    <property type="term" value="C:host cytoskeleton"/>
    <property type="evidence" value="ECO:0007669"/>
    <property type="project" value="UniProtKB-SubCell"/>
</dbReference>
<dbReference type="GO" id="GO:0046872">
    <property type="term" value="F:metal ion binding"/>
    <property type="evidence" value="ECO:0007669"/>
    <property type="project" value="UniProtKB-UniRule"/>
</dbReference>
<dbReference type="GO" id="GO:0003723">
    <property type="term" value="F:RNA binding"/>
    <property type="evidence" value="ECO:0007669"/>
    <property type="project" value="UniProtKB-UniRule"/>
</dbReference>
<dbReference type="GO" id="GO:0039548">
    <property type="term" value="P:symbiont-mediated suppression of host cytoplasmic pattern recognition receptor signaling pathway via inhibition of IRF3 activity"/>
    <property type="evidence" value="ECO:0007669"/>
    <property type="project" value="UniProtKB-UniRule"/>
</dbReference>
<dbReference type="GO" id="GO:0039557">
    <property type="term" value="P:symbiont-mediated suppression of host cytoplasmic pattern recognition receptor signaling pathway via inhibition of IRF7 activity"/>
    <property type="evidence" value="ECO:0007669"/>
    <property type="project" value="UniProtKB-UniRule"/>
</dbReference>
<dbReference type="HAMAP" id="MF_04088">
    <property type="entry name" value="ROTA_NSP1"/>
    <property type="match status" value="1"/>
</dbReference>
<dbReference type="InterPro" id="IPR002148">
    <property type="entry name" value="Rotavirus_NSP1"/>
</dbReference>
<dbReference type="Pfam" id="PF00981">
    <property type="entry name" value="Rota_NS53"/>
    <property type="match status" value="1"/>
</dbReference>
<protein>
    <recommendedName>
        <fullName evidence="1">Non-structural protein 1</fullName>
        <shortName evidence="1">NSP1</shortName>
    </recommendedName>
    <alternativeName>
        <fullName evidence="1">NCVP2</fullName>
    </alternativeName>
    <alternativeName>
        <fullName evidence="1">Non-structural RNA-binding protein 53</fullName>
        <shortName evidence="1">NS53</shortName>
    </alternativeName>
</protein>
<proteinExistence type="evidence at protein level"/>
<reference key="1">
    <citation type="journal article" date="2001" name="J. Virol.">
        <title>Effect of intragenic rearrangement and changes in the 3' consensus sequence on NSP1 expression and rotavirus replication.</title>
        <authorList>
            <person name="Patton J.T."/>
            <person name="Taraporewala Z.F."/>
            <person name="Chen D."/>
            <person name="Chizhikov V."/>
            <person name="Jones M.T."/>
            <person name="Elhelu A."/>
            <person name="Collins M."/>
            <person name="Kearney K."/>
            <person name="Wagner M."/>
            <person name="Hoshino Y."/>
            <person name="Gouvea V."/>
        </authorList>
    </citation>
    <scope>NUCLEOTIDE SEQUENCE [GENOMIC RNA]</scope>
</reference>
<reference key="2">
    <citation type="journal article" date="1994" name="J. Virol.">
        <title>Deletion mapping of the rotavirus metalloprotein NS53 (NSP1): the conserved cysteine-rich region is essential for virus-specific RNA binding.</title>
        <authorList>
            <person name="Hua J.J."/>
            <person name="Chen X."/>
            <person name="Patton J.T."/>
        </authorList>
    </citation>
    <scope>RNA-BINDING</scope>
    <scope>SUBCELLULAR LOCATION</scope>
</reference>
<reference key="3">
    <citation type="journal article" date="2005" name="Proc. Natl. Acad. Sci. U.S.A.">
        <title>Rotavirus nonstructural protein 1 subverts innate immune response by inducing degradation of IFN regulatory factor 3.</title>
        <authorList>
            <person name="Barro M."/>
            <person name="Patton J.T."/>
        </authorList>
    </citation>
    <scope>FUNCTION</scope>
    <scope>INTERACTION WITH HUMAN IRF3</scope>
</reference>
<reference key="4">
    <citation type="journal article" date="2007" name="J. Gen. Virol.">
        <title>Zinc-binding domain of rotavirus NSP1 is required for proteasome-dependent degradation of IRF3 and autoregulatory NSP1 stability.</title>
        <authorList>
            <person name="Graff J.W."/>
            <person name="Ewen J."/>
            <person name="Ettayebi K."/>
            <person name="Hardy M.E."/>
        </authorList>
    </citation>
    <scope>FUNCTION</scope>
</reference>
<reference key="5">
    <citation type="journal article" date="2007" name="J. Virol.">
        <title>Rotavirus NSP1 inhibits expression of type I interferon by antagonizing the function of interferon regulatory factors IRF3, IRF5, and IRF7.</title>
        <authorList>
            <person name="Barro M."/>
            <person name="Patton J.T."/>
        </authorList>
    </citation>
    <scope>FUNCTION</scope>
    <scope>INTERACTION WITH HUMAN IRF7</scope>
</reference>
<reference key="6">
    <citation type="journal article" date="2016" name="J. Virol.">
        <title>Rotavirus NSP1 Associates with Components of the Cullin RING Ligase Family of E3 Ubiquitin Ligases.</title>
        <authorList>
            <person name="Lutz L.M."/>
            <person name="Pace C.R."/>
            <person name="Arnold M.M."/>
        </authorList>
    </citation>
    <scope>FUNCTION</scope>
    <scope>INTERACTION WITH HOST CUL1 AND CUL3</scope>
</reference>
<reference evidence="8 9" key="7">
    <citation type="journal article" date="2016" name="Proc. Natl. Acad. Sci. U.S.A.">
        <title>Structural basis for concerted recruitment and activation of IRF-3 by innate immune adaptor proteins.</title>
        <authorList>
            <person name="Zhao B."/>
            <person name="Shu C."/>
            <person name="Gao X."/>
            <person name="Sankaran B."/>
            <person name="Du F."/>
            <person name="Shelton C.L."/>
            <person name="Herr A.B."/>
            <person name="Ji J.Y."/>
            <person name="Li P."/>
        </authorList>
    </citation>
    <scope>X-RAY CRYSTALLOGRAPHY (1.72 ANGSTROMS) OF 478-496 IN COMPLEX WITH HOST IRF3</scope>
    <scope>FUNCTION</scope>
    <scope>INTERACTION WITH HOST IRF3</scope>
    <scope>DOMAIN</scope>
    <scope>MUTAGENESIS OF GLU-482; PHE-484; LEU-486; ILE-488 AND SER-489</scope>
</reference>
<feature type="chain" id="PRO_0000367820" description="Non-structural protein 1">
    <location>
        <begin position="1"/>
        <end position="496"/>
    </location>
</feature>
<feature type="region of interest" description="RNA-binding" evidence="1">
    <location>
        <begin position="1"/>
        <end position="81"/>
    </location>
</feature>
<feature type="region of interest" description="Zinc-binding domain" evidence="1">
    <location>
        <begin position="42"/>
        <end position="79"/>
    </location>
</feature>
<feature type="region of interest" description="Important for cytoskeleton localization" evidence="1">
    <location>
        <begin position="82"/>
        <end position="177"/>
    </location>
</feature>
<feature type="region of interest" description="Interaction with host IRF3" evidence="1">
    <location>
        <begin position="321"/>
        <end position="496"/>
    </location>
</feature>
<feature type="short sequence motif" description="pLxIS motif" evidence="6">
    <location>
        <begin position="486"/>
        <end position="489"/>
    </location>
</feature>
<feature type="sequence variant" description="In strain: Isolate 5S.">
    <original>T</original>
    <variation>I</variation>
    <location>
        <position position="479"/>
    </location>
</feature>
<feature type="sequence variant" description="In strain: Isolate 5S.">
    <location>
        <begin position="480"/>
        <end position="496"/>
    </location>
</feature>
<feature type="mutagenesis site" description="Reduced Interaction with host IRF3." evidence="6">
    <original>E</original>
    <variation>A</variation>
    <location>
        <position position="482"/>
    </location>
</feature>
<feature type="mutagenesis site" description="Abolished interaction with host IRF3." evidence="6">
    <original>F</original>
    <variation>A</variation>
    <location>
        <position position="484"/>
    </location>
</feature>
<feature type="mutagenesis site" description="Abolished interaction with host IRF3." evidence="6">
    <original>L</original>
    <variation>A</variation>
    <location>
        <position position="486"/>
    </location>
</feature>
<feature type="mutagenesis site" description="Impaired ability to degrade host IRF3." evidence="6">
    <original>I</original>
    <variation>A</variation>
    <location>
        <position position="488"/>
    </location>
</feature>
<feature type="mutagenesis site" description="Does not affect ability to degrade host IRF3." evidence="6">
    <original>S</original>
    <variation>A</variation>
    <location>
        <position position="489"/>
    </location>
</feature>
<sequence>MATFKDACFHYRRLTALNRRLCNIGANSICMPVPDAKIKGWCLECCQIADLTHCYGCSLPHVCKWCVQNRRCFLDNEPHLLKLRTVKHPITKDKLQCIIDLYNIIFPINDKVIRKFERMIKQRKCRNQYKIEWYNHLLLPITLNAAAFKFDENNLYYVFGLYEKSVSDIYAPYRIVNFINEFDKLLLDDINFTRMSNLPIELRNHYAKKYFQLSRLPSSKLKQIYFSDFTKETVIFNTYTKTPGRSIYRNVTEFNWRDELELYSDLKNDKNKLIAAMMTSKYTRFYAHDNNFGRLKMTIFELGHHCQPNYVASNHPGNASDIQYCKWCNIKYFLSKIDWRIRDMYNLLMEFIKDCYKSNVNVGHCSSVENIYPLIKRLIWSLFTNHMDQTIEEVFNHMSPVSVEGTNVIMLILGLNISLYNEIKRTLNVDSIPMVLNLNEFSSIVKSISSKWYNVDELDKLPMSIKSTEELIEMKNSGTLTEEFELLISNSEDDNE</sequence>
<comment type="function">
    <text evidence="1 2 3 4 5 6">Plays a role in the inhibition of host innate immunity by inducing the degradation of key host factors required to activate interferon production such as IRF3, IRF5 or IRF7. Associates with components of cullin RING ligases (CRLs) including CUL1 or CUL3, which are essential multisubunit ubiquitination complexes, to modulate their activities.</text>
</comment>
<comment type="subunit">
    <text evidence="1 2 4 6">Interacts (via C-terminus pLxIS motif) with host IRF3; this interaction leads to IRF3 degradation. Interacts with host IRF7; this interaction leads to IRF7 degradation. Interacts with host CUL1 and CUL3.</text>
</comment>
<comment type="subcellular location">
    <subcellularLocation>
        <location evidence="1 7">Host cytoplasm</location>
        <location evidence="1 7">Host cytoskeleton</location>
    </subcellularLocation>
</comment>
<comment type="domain">
    <text evidence="6">The pLxIS motif targets host IRF3 for degradation; however phosphorylation of NSP1 pLxIS motif is not required for its activity.</text>
</comment>
<comment type="domain">
    <text evidence="1">The integrity of the zinc-binding domain in NSP1 is important for degradation of host IRF3.</text>
</comment>
<comment type="similarity">
    <text evidence="1">Belongs to the rotavirus NSP1 family.</text>
</comment>
<accession>Q99FX5</accession>
<accession>Q99FX4</accession>
<name>NSP1_ROTS4</name>
<keyword id="KW-0002">3D-structure</keyword>
<keyword id="KW-1035">Host cytoplasm</keyword>
<keyword id="KW-1037">Host cytoskeleton</keyword>
<keyword id="KW-0945">Host-virus interaction</keyword>
<keyword id="KW-1090">Inhibition of host innate immune response by virus</keyword>
<keyword id="KW-1092">Inhibition of host IRF3 by virus</keyword>
<keyword id="KW-1093">Inhibition of host IRF7 by virus</keyword>
<keyword id="KW-1113">Inhibition of host RLR pathway by virus</keyword>
<keyword id="KW-0922">Interferon antiviral system evasion</keyword>
<keyword id="KW-0479">Metal-binding</keyword>
<keyword id="KW-0694">RNA-binding</keyword>
<keyword id="KW-0899">Viral immunoevasion</keyword>